<evidence type="ECO:0000255" key="1">
    <source>
        <dbReference type="HAMAP-Rule" id="MF_00333"/>
    </source>
</evidence>
<reference key="1">
    <citation type="journal article" date="2007" name="PLoS Genet.">
        <title>Patterns and implications of gene gain and loss in the evolution of Prochlorococcus.</title>
        <authorList>
            <person name="Kettler G.C."/>
            <person name="Martiny A.C."/>
            <person name="Huang K."/>
            <person name="Zucker J."/>
            <person name="Coleman M.L."/>
            <person name="Rodrigue S."/>
            <person name="Chen F."/>
            <person name="Lapidus A."/>
            <person name="Ferriera S."/>
            <person name="Johnson J."/>
            <person name="Steglich C."/>
            <person name="Church G.M."/>
            <person name="Richardson P."/>
            <person name="Chisholm S.W."/>
        </authorList>
    </citation>
    <scope>NUCLEOTIDE SEQUENCE [LARGE SCALE GENOMIC DNA]</scope>
    <source>
        <strain>MIT 9301</strain>
    </source>
</reference>
<proteinExistence type="inferred from homology"/>
<gene>
    <name evidence="1" type="primary">hemF</name>
    <name type="ordered locus">P9301_17731</name>
</gene>
<comment type="function">
    <text evidence="1">Involved in the heme and chlorophyll biosynthesis. Catalyzes the aerobic oxidative decarboxylation of propionate groups of rings A and B of coproporphyrinogen-III to yield the vinyl groups in protoporphyrinogen-IX.</text>
</comment>
<comment type="catalytic activity">
    <reaction evidence="1">
        <text>coproporphyrinogen III + O2 + 2 H(+) = protoporphyrinogen IX + 2 CO2 + 2 H2O</text>
        <dbReference type="Rhea" id="RHEA:18257"/>
        <dbReference type="ChEBI" id="CHEBI:15377"/>
        <dbReference type="ChEBI" id="CHEBI:15378"/>
        <dbReference type="ChEBI" id="CHEBI:15379"/>
        <dbReference type="ChEBI" id="CHEBI:16526"/>
        <dbReference type="ChEBI" id="CHEBI:57307"/>
        <dbReference type="ChEBI" id="CHEBI:57309"/>
        <dbReference type="EC" id="1.3.3.3"/>
    </reaction>
</comment>
<comment type="cofactor">
    <cofactor evidence="1">
        <name>a divalent metal cation</name>
        <dbReference type="ChEBI" id="CHEBI:60240"/>
    </cofactor>
</comment>
<comment type="pathway">
    <text evidence="1">Porphyrin-containing compound metabolism; protoporphyrin-IX biosynthesis; protoporphyrinogen-IX from coproporphyrinogen-III (O2 route): step 1/1.</text>
</comment>
<comment type="subunit">
    <text evidence="1">Homodimer.</text>
</comment>
<comment type="subcellular location">
    <subcellularLocation>
        <location evidence="1">Cytoplasm</location>
    </subcellularLocation>
</comment>
<comment type="similarity">
    <text evidence="1">Belongs to the aerobic coproporphyrinogen-III oxidase family.</text>
</comment>
<sequence>MLKEPPKNSREKTKNLLLTLQDKICSGLENVDGKGKFTEESWLRDEGGGGRSRVLKNGSIFEQAGVNFSEVQGKELPQSIISQRPEAKGHEWFATGTSMVLHPKNPYIPTVHLNYRYFEAGPVWWFGGGADLTPFYPYLSDVRNFHNEHKKACEKVDQDLHKVFKPWCDEYFFLKHRNESRGIGGIFYDYQDGSGNIYRGNNQKGEASKASQNIGRSNLNWDDLFSLAENCGQAFLPSYLPIIEKRASQAYSSKEREFQLYRRGRYVEFNLVWDRGTIFGLQTNGRTESILMSLPPLARWEYGYKARKNSREEFLTSIFTKPQDWLNDKELEKFCIENNIFD</sequence>
<keyword id="KW-0149">Chlorophyll biosynthesis</keyword>
<keyword id="KW-0963">Cytoplasm</keyword>
<keyword id="KW-0350">Heme biosynthesis</keyword>
<keyword id="KW-0479">Metal-binding</keyword>
<keyword id="KW-0560">Oxidoreductase</keyword>
<keyword id="KW-0627">Porphyrin biosynthesis</keyword>
<keyword id="KW-1185">Reference proteome</keyword>
<accession>A3PF71</accession>
<dbReference type="EC" id="1.3.3.3" evidence="1"/>
<dbReference type="EMBL" id="CP000576">
    <property type="protein sequence ID" value="ABO18396.1"/>
    <property type="molecule type" value="Genomic_DNA"/>
</dbReference>
<dbReference type="RefSeq" id="WP_011863684.1">
    <property type="nucleotide sequence ID" value="NC_009091.1"/>
</dbReference>
<dbReference type="SMR" id="A3PF71"/>
<dbReference type="STRING" id="167546.P9301_17731"/>
<dbReference type="KEGG" id="pmg:P9301_17731"/>
<dbReference type="eggNOG" id="COG0408">
    <property type="taxonomic scope" value="Bacteria"/>
</dbReference>
<dbReference type="HOGENOM" id="CLU_026169_0_1_3"/>
<dbReference type="OrthoDB" id="9777553at2"/>
<dbReference type="UniPathway" id="UPA00251">
    <property type="reaction ID" value="UER00322"/>
</dbReference>
<dbReference type="Proteomes" id="UP000001430">
    <property type="component" value="Chromosome"/>
</dbReference>
<dbReference type="GO" id="GO:0005737">
    <property type="term" value="C:cytoplasm"/>
    <property type="evidence" value="ECO:0007669"/>
    <property type="project" value="UniProtKB-SubCell"/>
</dbReference>
<dbReference type="GO" id="GO:0004109">
    <property type="term" value="F:coproporphyrinogen oxidase activity"/>
    <property type="evidence" value="ECO:0007669"/>
    <property type="project" value="UniProtKB-UniRule"/>
</dbReference>
<dbReference type="GO" id="GO:0046872">
    <property type="term" value="F:metal ion binding"/>
    <property type="evidence" value="ECO:0007669"/>
    <property type="project" value="UniProtKB-KW"/>
</dbReference>
<dbReference type="GO" id="GO:0042803">
    <property type="term" value="F:protein homodimerization activity"/>
    <property type="evidence" value="ECO:0000250"/>
    <property type="project" value="UniProtKB"/>
</dbReference>
<dbReference type="GO" id="GO:0015995">
    <property type="term" value="P:chlorophyll biosynthetic process"/>
    <property type="evidence" value="ECO:0007669"/>
    <property type="project" value="UniProtKB-UniRule"/>
</dbReference>
<dbReference type="GO" id="GO:0006782">
    <property type="term" value="P:protoporphyrinogen IX biosynthetic process"/>
    <property type="evidence" value="ECO:0007669"/>
    <property type="project" value="UniProtKB-UniRule"/>
</dbReference>
<dbReference type="FunFam" id="3.40.1500.10:FF:000007">
    <property type="entry name" value="Oxygen-dependent coproporphyrinogen-III oxidase"/>
    <property type="match status" value="1"/>
</dbReference>
<dbReference type="Gene3D" id="3.40.1500.10">
    <property type="entry name" value="Coproporphyrinogen III oxidase, aerobic"/>
    <property type="match status" value="1"/>
</dbReference>
<dbReference type="HAMAP" id="MF_00333">
    <property type="entry name" value="Coprogen_oxidas"/>
    <property type="match status" value="1"/>
</dbReference>
<dbReference type="InterPro" id="IPR001260">
    <property type="entry name" value="Coprogen_oxidase_aer"/>
</dbReference>
<dbReference type="InterPro" id="IPR036406">
    <property type="entry name" value="Coprogen_oxidase_aer_sf"/>
</dbReference>
<dbReference type="InterPro" id="IPR018375">
    <property type="entry name" value="Coprogen_oxidase_CS"/>
</dbReference>
<dbReference type="NCBIfam" id="NF003727">
    <property type="entry name" value="PRK05330.1"/>
    <property type="match status" value="1"/>
</dbReference>
<dbReference type="PANTHER" id="PTHR10755">
    <property type="entry name" value="COPROPORPHYRINOGEN III OXIDASE, MITOCHONDRIAL"/>
    <property type="match status" value="1"/>
</dbReference>
<dbReference type="PANTHER" id="PTHR10755:SF0">
    <property type="entry name" value="OXYGEN-DEPENDENT COPROPORPHYRINOGEN-III OXIDASE, MITOCHONDRIAL"/>
    <property type="match status" value="1"/>
</dbReference>
<dbReference type="Pfam" id="PF01218">
    <property type="entry name" value="Coprogen_oxidas"/>
    <property type="match status" value="1"/>
</dbReference>
<dbReference type="PIRSF" id="PIRSF000166">
    <property type="entry name" value="Coproporphyri_ox"/>
    <property type="match status" value="1"/>
</dbReference>
<dbReference type="PRINTS" id="PR00073">
    <property type="entry name" value="COPRGNOXDASE"/>
</dbReference>
<dbReference type="SUPFAM" id="SSF102886">
    <property type="entry name" value="Coproporphyrinogen III oxidase"/>
    <property type="match status" value="1"/>
</dbReference>
<dbReference type="PROSITE" id="PS01021">
    <property type="entry name" value="COPROGEN_OXIDASE"/>
    <property type="match status" value="1"/>
</dbReference>
<name>HEM6_PROM0</name>
<protein>
    <recommendedName>
        <fullName evidence="1">Oxygen-dependent coproporphyrinogen-III oxidase</fullName>
        <shortName evidence="1">CPO</shortName>
        <shortName evidence="1">Coprogen oxidase</shortName>
        <shortName evidence="1">Coproporphyrinogenase</shortName>
        <ecNumber evidence="1">1.3.3.3</ecNumber>
    </recommendedName>
</protein>
<organism>
    <name type="scientific">Prochlorococcus marinus (strain MIT 9301)</name>
    <dbReference type="NCBI Taxonomy" id="167546"/>
    <lineage>
        <taxon>Bacteria</taxon>
        <taxon>Bacillati</taxon>
        <taxon>Cyanobacteriota</taxon>
        <taxon>Cyanophyceae</taxon>
        <taxon>Synechococcales</taxon>
        <taxon>Prochlorococcaceae</taxon>
        <taxon>Prochlorococcus</taxon>
    </lineage>
</organism>
<feature type="chain" id="PRO_1000019476" description="Oxygen-dependent coproporphyrinogen-III oxidase">
    <location>
        <begin position="1"/>
        <end position="342"/>
    </location>
</feature>
<feature type="region of interest" description="Important for dimerization" evidence="1">
    <location>
        <begin position="266"/>
        <end position="301"/>
    </location>
</feature>
<feature type="active site" description="Proton donor" evidence="1">
    <location>
        <position position="112"/>
    </location>
</feature>
<feature type="binding site" evidence="1">
    <location>
        <position position="98"/>
    </location>
    <ligand>
        <name>substrate</name>
    </ligand>
</feature>
<feature type="binding site" evidence="1">
    <location>
        <position position="102"/>
    </location>
    <ligand>
        <name>a divalent metal cation</name>
        <dbReference type="ChEBI" id="CHEBI:60240"/>
    </ligand>
</feature>
<feature type="binding site" evidence="1">
    <location>
        <position position="112"/>
    </location>
    <ligand>
        <name>a divalent metal cation</name>
        <dbReference type="ChEBI" id="CHEBI:60240"/>
    </ligand>
</feature>
<feature type="binding site" evidence="1">
    <location>
        <begin position="114"/>
        <end position="116"/>
    </location>
    <ligand>
        <name>substrate</name>
    </ligand>
</feature>
<feature type="binding site" evidence="1">
    <location>
        <position position="146"/>
    </location>
    <ligand>
        <name>a divalent metal cation</name>
        <dbReference type="ChEBI" id="CHEBI:60240"/>
    </ligand>
</feature>
<feature type="binding site" evidence="1">
    <location>
        <position position="176"/>
    </location>
    <ligand>
        <name>a divalent metal cation</name>
        <dbReference type="ChEBI" id="CHEBI:60240"/>
    </ligand>
</feature>
<feature type="site" description="Important for dimerization" evidence="1">
    <location>
        <position position="176"/>
    </location>
</feature>